<keyword id="KW-0520">NAD</keyword>
<keyword id="KW-0560">Oxidoreductase</keyword>
<keyword id="KW-1185">Reference proteome</keyword>
<comment type="similarity">
    <text evidence="4">Belongs to the short-chain dehydrogenases/reductases (SDR) family.</text>
</comment>
<evidence type="ECO:0000250" key="1"/>
<evidence type="ECO:0000250" key="2">
    <source>
        <dbReference type="UniProtKB" id="Q99714"/>
    </source>
</evidence>
<evidence type="ECO:0000255" key="3">
    <source>
        <dbReference type="PROSITE-ProRule" id="PRU10001"/>
    </source>
</evidence>
<evidence type="ECO:0000305" key="4"/>
<protein>
    <recommendedName>
        <fullName>Uncharacterized oxidoreductase MT1393</fullName>
        <ecNumber>1.-.-.-</ecNumber>
    </recommendedName>
</protein>
<gene>
    <name type="primary">fabG2</name>
    <name type="ordered locus">MT1393</name>
</gene>
<accession>P9WGR8</accession>
<accession>L0T9D4</accession>
<accession>P66781</accession>
<accession>Q11020</accession>
<name>Y1350_MYCTO</name>
<proteinExistence type="inferred from homology"/>
<dbReference type="EC" id="1.-.-.-"/>
<dbReference type="EMBL" id="AE000516">
    <property type="protein sequence ID" value="AAK45656.1"/>
    <property type="molecule type" value="Genomic_DNA"/>
</dbReference>
<dbReference type="PIR" id="E70740">
    <property type="entry name" value="E70740"/>
</dbReference>
<dbReference type="SMR" id="P9WGR8"/>
<dbReference type="KEGG" id="mtc:MT1393"/>
<dbReference type="PATRIC" id="fig|83331.31.peg.1500"/>
<dbReference type="HOGENOM" id="CLU_010194_1_3_11"/>
<dbReference type="Proteomes" id="UP000001020">
    <property type="component" value="Chromosome"/>
</dbReference>
<dbReference type="GO" id="GO:0016616">
    <property type="term" value="F:oxidoreductase activity, acting on the CH-OH group of donors, NAD or NADP as acceptor"/>
    <property type="evidence" value="ECO:0007669"/>
    <property type="project" value="TreeGrafter"/>
</dbReference>
<dbReference type="GO" id="GO:0030497">
    <property type="term" value="P:fatty acid elongation"/>
    <property type="evidence" value="ECO:0007669"/>
    <property type="project" value="TreeGrafter"/>
</dbReference>
<dbReference type="FunFam" id="3.40.50.720:FF:000173">
    <property type="entry name" value="3-oxoacyl-[acyl-carrier protein] reductase"/>
    <property type="match status" value="1"/>
</dbReference>
<dbReference type="Gene3D" id="3.40.50.720">
    <property type="entry name" value="NAD(P)-binding Rossmann-like Domain"/>
    <property type="match status" value="1"/>
</dbReference>
<dbReference type="InterPro" id="IPR036291">
    <property type="entry name" value="NAD(P)-bd_dom_sf"/>
</dbReference>
<dbReference type="InterPro" id="IPR020904">
    <property type="entry name" value="Sc_DH/Rdtase_CS"/>
</dbReference>
<dbReference type="InterPro" id="IPR002347">
    <property type="entry name" value="SDR_fam"/>
</dbReference>
<dbReference type="NCBIfam" id="NF004198">
    <property type="entry name" value="PRK05653.1-3"/>
    <property type="match status" value="1"/>
</dbReference>
<dbReference type="NCBIfam" id="NF005559">
    <property type="entry name" value="PRK07231.1"/>
    <property type="match status" value="1"/>
</dbReference>
<dbReference type="NCBIfam" id="NF009466">
    <property type="entry name" value="PRK12826.1-2"/>
    <property type="match status" value="1"/>
</dbReference>
<dbReference type="PANTHER" id="PTHR42760:SF40">
    <property type="entry name" value="3-OXOACYL-[ACYL-CARRIER-PROTEIN] REDUCTASE, CHLOROPLASTIC"/>
    <property type="match status" value="1"/>
</dbReference>
<dbReference type="PANTHER" id="PTHR42760">
    <property type="entry name" value="SHORT-CHAIN DEHYDROGENASES/REDUCTASES FAMILY MEMBER"/>
    <property type="match status" value="1"/>
</dbReference>
<dbReference type="Pfam" id="PF13561">
    <property type="entry name" value="adh_short_C2"/>
    <property type="match status" value="1"/>
</dbReference>
<dbReference type="PRINTS" id="PR00081">
    <property type="entry name" value="GDHRDH"/>
</dbReference>
<dbReference type="PRINTS" id="PR00080">
    <property type="entry name" value="SDRFAMILY"/>
</dbReference>
<dbReference type="SMART" id="SM00822">
    <property type="entry name" value="PKS_KR"/>
    <property type="match status" value="1"/>
</dbReference>
<dbReference type="SUPFAM" id="SSF51735">
    <property type="entry name" value="NAD(P)-binding Rossmann-fold domains"/>
    <property type="match status" value="1"/>
</dbReference>
<dbReference type="PROSITE" id="PS00061">
    <property type="entry name" value="ADH_SHORT"/>
    <property type="match status" value="1"/>
</dbReference>
<reference key="1">
    <citation type="journal article" date="2002" name="J. Bacteriol.">
        <title>Whole-genome comparison of Mycobacterium tuberculosis clinical and laboratory strains.</title>
        <authorList>
            <person name="Fleischmann R.D."/>
            <person name="Alland D."/>
            <person name="Eisen J.A."/>
            <person name="Carpenter L."/>
            <person name="White O."/>
            <person name="Peterson J.D."/>
            <person name="DeBoy R.T."/>
            <person name="Dodson R.J."/>
            <person name="Gwinn M.L."/>
            <person name="Haft D.H."/>
            <person name="Hickey E.K."/>
            <person name="Kolonay J.F."/>
            <person name="Nelson W.C."/>
            <person name="Umayam L.A."/>
            <person name="Ermolaeva M.D."/>
            <person name="Salzberg S.L."/>
            <person name="Delcher A."/>
            <person name="Utterback T.R."/>
            <person name="Weidman J.F."/>
            <person name="Khouri H.M."/>
            <person name="Gill J."/>
            <person name="Mikula A."/>
            <person name="Bishai W."/>
            <person name="Jacobs W.R. Jr."/>
            <person name="Venter J.C."/>
            <person name="Fraser C.M."/>
        </authorList>
    </citation>
    <scope>NUCLEOTIDE SEQUENCE [LARGE SCALE GENOMIC DNA]</scope>
    <source>
        <strain>CDC 1551 / Oshkosh</strain>
    </source>
</reference>
<sequence length="247" mass="25871">MASLLNARTAVITGGAQGLGLAIGQRFVAEGARVVLGDVNLEATEVAAKRLGGDDVALAVRCDVTQADDVDILIRTAVERFGGLDVMVNNAGITRDATMRTMTEEQFDQVIAVHLKGTWNGTRLAAAIMRERKRGAIVNMSSVSGKVGMVGQTNYSAAKAGIVGMTKAAAKELAHLGIRVNAIAPGLIRSAMTEAMPQRIWDQKLAEVPMGRAGEPSEVASVAVFLASDLSSYMTGTVLDVTGGRFI</sequence>
<feature type="chain" id="PRO_0000428314" description="Uncharacterized oxidoreductase MT1393">
    <location>
        <begin position="1"/>
        <end position="247"/>
    </location>
</feature>
<feature type="active site" description="Proton acceptor" evidence="3">
    <location>
        <position position="155"/>
    </location>
</feature>
<feature type="binding site" evidence="2">
    <location>
        <position position="19"/>
    </location>
    <ligand>
        <name>NAD(+)</name>
        <dbReference type="ChEBI" id="CHEBI:57540"/>
    </ligand>
</feature>
<feature type="binding site" evidence="2">
    <location>
        <position position="38"/>
    </location>
    <ligand>
        <name>NAD(+)</name>
        <dbReference type="ChEBI" id="CHEBI:57540"/>
    </ligand>
</feature>
<feature type="binding site" evidence="2">
    <location>
        <position position="63"/>
    </location>
    <ligand>
        <name>NAD(+)</name>
        <dbReference type="ChEBI" id="CHEBI:57540"/>
    </ligand>
</feature>
<feature type="binding site" evidence="2">
    <location>
        <position position="64"/>
    </location>
    <ligand>
        <name>NAD(+)</name>
        <dbReference type="ChEBI" id="CHEBI:57540"/>
    </ligand>
</feature>
<feature type="binding site" evidence="1">
    <location>
        <position position="142"/>
    </location>
    <ligand>
        <name>substrate</name>
    </ligand>
</feature>
<feature type="binding site" evidence="2">
    <location>
        <position position="155"/>
    </location>
    <ligand>
        <name>NAD(+)</name>
        <dbReference type="ChEBI" id="CHEBI:57540"/>
    </ligand>
</feature>
<feature type="binding site" evidence="2">
    <location>
        <position position="159"/>
    </location>
    <ligand>
        <name>NAD(+)</name>
        <dbReference type="ChEBI" id="CHEBI:57540"/>
    </ligand>
</feature>
<feature type="binding site" evidence="2">
    <location>
        <position position="190"/>
    </location>
    <ligand>
        <name>NAD(+)</name>
        <dbReference type="ChEBI" id="CHEBI:57540"/>
    </ligand>
</feature>
<organism>
    <name type="scientific">Mycobacterium tuberculosis (strain CDC 1551 / Oshkosh)</name>
    <dbReference type="NCBI Taxonomy" id="83331"/>
    <lineage>
        <taxon>Bacteria</taxon>
        <taxon>Bacillati</taxon>
        <taxon>Actinomycetota</taxon>
        <taxon>Actinomycetes</taxon>
        <taxon>Mycobacteriales</taxon>
        <taxon>Mycobacteriaceae</taxon>
        <taxon>Mycobacterium</taxon>
        <taxon>Mycobacterium tuberculosis complex</taxon>
    </lineage>
</organism>